<protein>
    <recommendedName>
        <fullName evidence="1">3-phosphoshikimate 1-carboxyvinyltransferase</fullName>
        <ecNumber evidence="1">2.5.1.19</ecNumber>
    </recommendedName>
    <alternativeName>
        <fullName evidence="1">5-enolpyruvylshikimate-3-phosphate synthase</fullName>
        <shortName evidence="1">EPSP synthase</shortName>
        <shortName evidence="1">EPSPS</shortName>
    </alternativeName>
</protein>
<evidence type="ECO:0000255" key="1">
    <source>
        <dbReference type="HAMAP-Rule" id="MF_00210"/>
    </source>
</evidence>
<dbReference type="EC" id="2.5.1.19" evidence="1"/>
<dbReference type="EMBL" id="BA000028">
    <property type="protein sequence ID" value="BAC13736.1"/>
    <property type="molecule type" value="Genomic_DNA"/>
</dbReference>
<dbReference type="RefSeq" id="WP_011066179.1">
    <property type="nucleotide sequence ID" value="NC_004193.1"/>
</dbReference>
<dbReference type="SMR" id="Q8EQC1"/>
<dbReference type="STRING" id="221109.gene:10734020"/>
<dbReference type="KEGG" id="oih:OB1780"/>
<dbReference type="eggNOG" id="COG0128">
    <property type="taxonomic scope" value="Bacteria"/>
</dbReference>
<dbReference type="HOGENOM" id="CLU_024321_0_1_9"/>
<dbReference type="OrthoDB" id="9809920at2"/>
<dbReference type="PhylomeDB" id="Q8EQC1"/>
<dbReference type="UniPathway" id="UPA00053">
    <property type="reaction ID" value="UER00089"/>
</dbReference>
<dbReference type="Proteomes" id="UP000000822">
    <property type="component" value="Chromosome"/>
</dbReference>
<dbReference type="GO" id="GO:0005737">
    <property type="term" value="C:cytoplasm"/>
    <property type="evidence" value="ECO:0007669"/>
    <property type="project" value="UniProtKB-SubCell"/>
</dbReference>
<dbReference type="GO" id="GO:0003866">
    <property type="term" value="F:3-phosphoshikimate 1-carboxyvinyltransferase activity"/>
    <property type="evidence" value="ECO:0007669"/>
    <property type="project" value="UniProtKB-UniRule"/>
</dbReference>
<dbReference type="GO" id="GO:0008652">
    <property type="term" value="P:amino acid biosynthetic process"/>
    <property type="evidence" value="ECO:0007669"/>
    <property type="project" value="UniProtKB-KW"/>
</dbReference>
<dbReference type="GO" id="GO:0009073">
    <property type="term" value="P:aromatic amino acid family biosynthetic process"/>
    <property type="evidence" value="ECO:0007669"/>
    <property type="project" value="UniProtKB-KW"/>
</dbReference>
<dbReference type="GO" id="GO:0009423">
    <property type="term" value="P:chorismate biosynthetic process"/>
    <property type="evidence" value="ECO:0007669"/>
    <property type="project" value="UniProtKB-UniRule"/>
</dbReference>
<dbReference type="CDD" id="cd01556">
    <property type="entry name" value="EPSP_synthase"/>
    <property type="match status" value="1"/>
</dbReference>
<dbReference type="FunFam" id="3.65.10.10:FF:000005">
    <property type="entry name" value="3-phosphoshikimate 1-carboxyvinyltransferase"/>
    <property type="match status" value="1"/>
</dbReference>
<dbReference type="FunFam" id="3.65.10.10:FF:000006">
    <property type="entry name" value="3-phosphoshikimate 1-carboxyvinyltransferase"/>
    <property type="match status" value="1"/>
</dbReference>
<dbReference type="Gene3D" id="3.65.10.10">
    <property type="entry name" value="Enolpyruvate transferase domain"/>
    <property type="match status" value="2"/>
</dbReference>
<dbReference type="HAMAP" id="MF_00210">
    <property type="entry name" value="EPSP_synth"/>
    <property type="match status" value="1"/>
</dbReference>
<dbReference type="InterPro" id="IPR001986">
    <property type="entry name" value="Enolpyruvate_Tfrase_dom"/>
</dbReference>
<dbReference type="InterPro" id="IPR036968">
    <property type="entry name" value="Enolpyruvate_Tfrase_sf"/>
</dbReference>
<dbReference type="InterPro" id="IPR006264">
    <property type="entry name" value="EPSP_synthase"/>
</dbReference>
<dbReference type="InterPro" id="IPR023193">
    <property type="entry name" value="EPSP_synthase_CS"/>
</dbReference>
<dbReference type="InterPro" id="IPR013792">
    <property type="entry name" value="RNA3'P_cycl/enolpyr_Trfase_a/b"/>
</dbReference>
<dbReference type="NCBIfam" id="TIGR01356">
    <property type="entry name" value="aroA"/>
    <property type="match status" value="1"/>
</dbReference>
<dbReference type="PANTHER" id="PTHR21090">
    <property type="entry name" value="AROM/DEHYDROQUINATE SYNTHASE"/>
    <property type="match status" value="1"/>
</dbReference>
<dbReference type="PANTHER" id="PTHR21090:SF5">
    <property type="entry name" value="PENTAFUNCTIONAL AROM POLYPEPTIDE"/>
    <property type="match status" value="1"/>
</dbReference>
<dbReference type="Pfam" id="PF00275">
    <property type="entry name" value="EPSP_synthase"/>
    <property type="match status" value="1"/>
</dbReference>
<dbReference type="PIRSF" id="PIRSF000505">
    <property type="entry name" value="EPSPS"/>
    <property type="match status" value="1"/>
</dbReference>
<dbReference type="SUPFAM" id="SSF55205">
    <property type="entry name" value="EPT/RTPC-like"/>
    <property type="match status" value="1"/>
</dbReference>
<dbReference type="PROSITE" id="PS00104">
    <property type="entry name" value="EPSP_SYNTHASE_1"/>
    <property type="match status" value="1"/>
</dbReference>
<dbReference type="PROSITE" id="PS00885">
    <property type="entry name" value="EPSP_SYNTHASE_2"/>
    <property type="match status" value="1"/>
</dbReference>
<proteinExistence type="inferred from homology"/>
<reference key="1">
    <citation type="journal article" date="2002" name="Nucleic Acids Res.">
        <title>Genome sequence of Oceanobacillus iheyensis isolated from the Iheya Ridge and its unexpected adaptive capabilities to extreme environments.</title>
        <authorList>
            <person name="Takami H."/>
            <person name="Takaki Y."/>
            <person name="Uchiyama I."/>
        </authorList>
    </citation>
    <scope>NUCLEOTIDE SEQUENCE [LARGE SCALE GENOMIC DNA]</scope>
    <source>
        <strain>DSM 14371 / CIP 107618 / JCM 11309 / KCTC 3954 / HTE831</strain>
    </source>
</reference>
<sequence length="429" mass="45743">MNPLALQPISGSLHGTIKVPGDKSISHRSIIFGSIAKGTTTVTNFLDGEDCMRTIDAFKEMGVPIQKNGSNVTIEGTGLSGLMEPNKELDFGNSGTTTRLMLGLLAGLPFNTTVYGDASLSKRPMNRVVDPLRLMGATIDGKEQGNYLPLTITGTSLNSIDYDLPVKSAQVKSALLLAGLHSENTTIVREKSPTRNHTETMLQAFGANIKSDGHTTSISKTDDLQGCHVEVPGDISSAAFFVVAACMVPGSEVILKDVGLNETRTGIIDIVLQMGAKLTIQNERIVGGEKIGDILIISSPLTGVTIEGDAIPRLIDEIPILALLATQADGTTIIKDAEELKVKETDRLLAVSENLTQLGADVTPTEDGMIIRGNTKLKGGNFKSFDDHRIAMMGIIASLVTEDTVVVDNIDCINISYPNFVNDLQSILK</sequence>
<comment type="function">
    <text evidence="1">Catalyzes the transfer of the enolpyruvyl moiety of phosphoenolpyruvate (PEP) to the 5-hydroxyl of shikimate-3-phosphate (S3P) to produce enolpyruvyl shikimate-3-phosphate and inorganic phosphate.</text>
</comment>
<comment type="catalytic activity">
    <reaction evidence="1">
        <text>3-phosphoshikimate + phosphoenolpyruvate = 5-O-(1-carboxyvinyl)-3-phosphoshikimate + phosphate</text>
        <dbReference type="Rhea" id="RHEA:21256"/>
        <dbReference type="ChEBI" id="CHEBI:43474"/>
        <dbReference type="ChEBI" id="CHEBI:57701"/>
        <dbReference type="ChEBI" id="CHEBI:58702"/>
        <dbReference type="ChEBI" id="CHEBI:145989"/>
        <dbReference type="EC" id="2.5.1.19"/>
    </reaction>
    <physiologicalReaction direction="left-to-right" evidence="1">
        <dbReference type="Rhea" id="RHEA:21257"/>
    </physiologicalReaction>
</comment>
<comment type="pathway">
    <text evidence="1">Metabolic intermediate biosynthesis; chorismate biosynthesis; chorismate from D-erythrose 4-phosphate and phosphoenolpyruvate: step 6/7.</text>
</comment>
<comment type="subunit">
    <text evidence="1">Monomer.</text>
</comment>
<comment type="subcellular location">
    <subcellularLocation>
        <location evidence="1">Cytoplasm</location>
    </subcellularLocation>
</comment>
<comment type="similarity">
    <text evidence="1">Belongs to the EPSP synthase family.</text>
</comment>
<name>AROA_OCEIH</name>
<keyword id="KW-0028">Amino-acid biosynthesis</keyword>
<keyword id="KW-0057">Aromatic amino acid biosynthesis</keyword>
<keyword id="KW-0963">Cytoplasm</keyword>
<keyword id="KW-1185">Reference proteome</keyword>
<keyword id="KW-0808">Transferase</keyword>
<gene>
    <name evidence="1" type="primary">aroA</name>
    <name type="synonym">aroE</name>
    <name type="ordered locus">OB1780</name>
</gene>
<organism>
    <name type="scientific">Oceanobacillus iheyensis (strain DSM 14371 / CIP 107618 / JCM 11309 / KCTC 3954 / HTE831)</name>
    <dbReference type="NCBI Taxonomy" id="221109"/>
    <lineage>
        <taxon>Bacteria</taxon>
        <taxon>Bacillati</taxon>
        <taxon>Bacillota</taxon>
        <taxon>Bacilli</taxon>
        <taxon>Bacillales</taxon>
        <taxon>Bacillaceae</taxon>
        <taxon>Oceanobacillus</taxon>
    </lineage>
</organism>
<accession>Q8EQC1</accession>
<feature type="chain" id="PRO_0000088276" description="3-phosphoshikimate 1-carboxyvinyltransferase">
    <location>
        <begin position="1"/>
        <end position="429"/>
    </location>
</feature>
<feature type="active site" description="Proton acceptor" evidence="1">
    <location>
        <position position="316"/>
    </location>
</feature>
<feature type="binding site" evidence="1">
    <location>
        <position position="23"/>
    </location>
    <ligand>
        <name>3-phosphoshikimate</name>
        <dbReference type="ChEBI" id="CHEBI:145989"/>
    </ligand>
</feature>
<feature type="binding site" evidence="1">
    <location>
        <position position="23"/>
    </location>
    <ligand>
        <name>phosphoenolpyruvate</name>
        <dbReference type="ChEBI" id="CHEBI:58702"/>
    </ligand>
</feature>
<feature type="binding site" evidence="1">
    <location>
        <position position="24"/>
    </location>
    <ligand>
        <name>3-phosphoshikimate</name>
        <dbReference type="ChEBI" id="CHEBI:145989"/>
    </ligand>
</feature>
<feature type="binding site" evidence="1">
    <location>
        <position position="28"/>
    </location>
    <ligand>
        <name>3-phosphoshikimate</name>
        <dbReference type="ChEBI" id="CHEBI:145989"/>
    </ligand>
</feature>
<feature type="binding site" evidence="1">
    <location>
        <position position="95"/>
    </location>
    <ligand>
        <name>phosphoenolpyruvate</name>
        <dbReference type="ChEBI" id="CHEBI:58702"/>
    </ligand>
</feature>
<feature type="binding site" evidence="1">
    <location>
        <position position="123"/>
    </location>
    <ligand>
        <name>phosphoenolpyruvate</name>
        <dbReference type="ChEBI" id="CHEBI:58702"/>
    </ligand>
</feature>
<feature type="binding site" evidence="1">
    <location>
        <position position="168"/>
    </location>
    <ligand>
        <name>3-phosphoshikimate</name>
        <dbReference type="ChEBI" id="CHEBI:145989"/>
    </ligand>
</feature>
<feature type="binding site" evidence="1">
    <location>
        <position position="170"/>
    </location>
    <ligand>
        <name>3-phosphoshikimate</name>
        <dbReference type="ChEBI" id="CHEBI:145989"/>
    </ligand>
</feature>
<feature type="binding site" evidence="1">
    <location>
        <position position="170"/>
    </location>
    <ligand>
        <name>phosphoenolpyruvate</name>
        <dbReference type="ChEBI" id="CHEBI:58702"/>
    </ligand>
</feature>
<feature type="binding site" evidence="1">
    <location>
        <position position="316"/>
    </location>
    <ligand>
        <name>3-phosphoshikimate</name>
        <dbReference type="ChEBI" id="CHEBI:145989"/>
    </ligand>
</feature>
<feature type="binding site" evidence="1">
    <location>
        <position position="343"/>
    </location>
    <ligand>
        <name>3-phosphoshikimate</name>
        <dbReference type="ChEBI" id="CHEBI:145989"/>
    </ligand>
</feature>
<feature type="binding site" evidence="1">
    <location>
        <position position="347"/>
    </location>
    <ligand>
        <name>phosphoenolpyruvate</name>
        <dbReference type="ChEBI" id="CHEBI:58702"/>
    </ligand>
</feature>
<feature type="binding site" evidence="1">
    <location>
        <position position="389"/>
    </location>
    <ligand>
        <name>phosphoenolpyruvate</name>
        <dbReference type="ChEBI" id="CHEBI:58702"/>
    </ligand>
</feature>